<feature type="chain" id="PRO_0000281561" description="Zinc import ATP-binding protein ZnuC 2">
    <location>
        <begin position="1"/>
        <end position="243"/>
    </location>
</feature>
<feature type="domain" description="ABC transporter" evidence="1">
    <location>
        <begin position="3"/>
        <end position="218"/>
    </location>
</feature>
<feature type="binding site" evidence="1">
    <location>
        <begin position="35"/>
        <end position="42"/>
    </location>
    <ligand>
        <name>ATP</name>
        <dbReference type="ChEBI" id="CHEBI:30616"/>
    </ligand>
</feature>
<accession>Q5E284</accession>
<proteinExistence type="inferred from homology"/>
<keyword id="KW-0067">ATP-binding</keyword>
<keyword id="KW-0997">Cell inner membrane</keyword>
<keyword id="KW-1003">Cell membrane</keyword>
<keyword id="KW-0406">Ion transport</keyword>
<keyword id="KW-0472">Membrane</keyword>
<keyword id="KW-0547">Nucleotide-binding</keyword>
<keyword id="KW-1185">Reference proteome</keyword>
<keyword id="KW-1278">Translocase</keyword>
<keyword id="KW-0813">Transport</keyword>
<keyword id="KW-0862">Zinc</keyword>
<keyword id="KW-0864">Zinc transport</keyword>
<reference key="1">
    <citation type="journal article" date="2005" name="Proc. Natl. Acad. Sci. U.S.A.">
        <title>Complete genome sequence of Vibrio fischeri: a symbiotic bacterium with pathogenic congeners.</title>
        <authorList>
            <person name="Ruby E.G."/>
            <person name="Urbanowski M."/>
            <person name="Campbell J."/>
            <person name="Dunn A."/>
            <person name="Faini M."/>
            <person name="Gunsalus R."/>
            <person name="Lostroh P."/>
            <person name="Lupp C."/>
            <person name="McCann J."/>
            <person name="Millikan D."/>
            <person name="Schaefer A."/>
            <person name="Stabb E."/>
            <person name="Stevens A."/>
            <person name="Visick K."/>
            <person name="Whistler C."/>
            <person name="Greenberg E.P."/>
        </authorList>
    </citation>
    <scope>NUCLEOTIDE SEQUENCE [LARGE SCALE GENOMIC DNA]</scope>
    <source>
        <strain>ATCC 700601 / ES114</strain>
    </source>
</reference>
<organism>
    <name type="scientific">Aliivibrio fischeri (strain ATCC 700601 / ES114)</name>
    <name type="common">Vibrio fischeri</name>
    <dbReference type="NCBI Taxonomy" id="312309"/>
    <lineage>
        <taxon>Bacteria</taxon>
        <taxon>Pseudomonadati</taxon>
        <taxon>Pseudomonadota</taxon>
        <taxon>Gammaproteobacteria</taxon>
        <taxon>Vibrionales</taxon>
        <taxon>Vibrionaceae</taxon>
        <taxon>Aliivibrio</taxon>
    </lineage>
</organism>
<gene>
    <name evidence="1" type="primary">znuC2</name>
    <name type="ordered locus">VF_2367</name>
</gene>
<name>ZNUC2_ALIF1</name>
<evidence type="ECO:0000255" key="1">
    <source>
        <dbReference type="HAMAP-Rule" id="MF_01725"/>
    </source>
</evidence>
<sequence>MLLSLHQLSVKFGKHLILDRINISIGRGEIVTIVGPNGSGKSTLLKTLIGAIKPVSGCIERAEKLKVGYVPQRLHIDEALPMTVFRFLTLPVQRSKKTISQALVRAGIPGVEKQQLNSLSGGQLQRVLLARALLEEPMLLLLDEATQGLDQRGTVDFYQHIDSFRKETGCAIIMVSHDLHVVMKNTDRVICLNGQICCEGTPEKVSNSPEYKVLFGLDDNDVLGVYRHKAASNQFNGSVLNVG</sequence>
<protein>
    <recommendedName>
        <fullName evidence="1">Zinc import ATP-binding protein ZnuC 2</fullName>
        <ecNumber evidence="1">7.2.2.20</ecNumber>
    </recommendedName>
</protein>
<comment type="function">
    <text evidence="1">Part of the ABC transporter complex ZnuABC involved in zinc import. Responsible for energy coupling to the transport system.</text>
</comment>
<comment type="catalytic activity">
    <reaction evidence="1">
        <text>Zn(2+)(out) + ATP(in) + H2O(in) = Zn(2+)(in) + ADP(in) + phosphate(in) + H(+)(in)</text>
        <dbReference type="Rhea" id="RHEA:29795"/>
        <dbReference type="ChEBI" id="CHEBI:15377"/>
        <dbReference type="ChEBI" id="CHEBI:15378"/>
        <dbReference type="ChEBI" id="CHEBI:29105"/>
        <dbReference type="ChEBI" id="CHEBI:30616"/>
        <dbReference type="ChEBI" id="CHEBI:43474"/>
        <dbReference type="ChEBI" id="CHEBI:456216"/>
        <dbReference type="EC" id="7.2.2.20"/>
    </reaction>
</comment>
<comment type="subunit">
    <text evidence="1">The complex is composed of two ATP-binding proteins (ZnuC), two transmembrane proteins (ZnuB) and a solute-binding protein (ZnuA).</text>
</comment>
<comment type="subcellular location">
    <subcellularLocation>
        <location evidence="1">Cell inner membrane</location>
        <topology evidence="1">Peripheral membrane protein</topology>
    </subcellularLocation>
</comment>
<comment type="similarity">
    <text evidence="1">Belongs to the ABC transporter superfamily. Zinc importer (TC 3.A.1.15.5) family.</text>
</comment>
<dbReference type="EC" id="7.2.2.20" evidence="1"/>
<dbReference type="EMBL" id="CP000020">
    <property type="protein sequence ID" value="AAW86862.1"/>
    <property type="molecule type" value="Genomic_DNA"/>
</dbReference>
<dbReference type="RefSeq" id="WP_011262759.1">
    <property type="nucleotide sequence ID" value="NC_006840.2"/>
</dbReference>
<dbReference type="RefSeq" id="YP_205750.1">
    <property type="nucleotide sequence ID" value="NC_006840.2"/>
</dbReference>
<dbReference type="SMR" id="Q5E284"/>
<dbReference type="STRING" id="312309.VF_2367"/>
<dbReference type="EnsemblBacteria" id="AAW86862">
    <property type="protein sequence ID" value="AAW86862"/>
    <property type="gene ID" value="VF_2367"/>
</dbReference>
<dbReference type="GeneID" id="54165088"/>
<dbReference type="KEGG" id="vfi:VF_2367"/>
<dbReference type="PATRIC" id="fig|312309.11.peg.2405"/>
<dbReference type="eggNOG" id="COG1121">
    <property type="taxonomic scope" value="Bacteria"/>
</dbReference>
<dbReference type="HOGENOM" id="CLU_000604_1_11_6"/>
<dbReference type="OrthoDB" id="5866165at2"/>
<dbReference type="Proteomes" id="UP000000537">
    <property type="component" value="Chromosome I"/>
</dbReference>
<dbReference type="GO" id="GO:0005886">
    <property type="term" value="C:plasma membrane"/>
    <property type="evidence" value="ECO:0007669"/>
    <property type="project" value="UniProtKB-SubCell"/>
</dbReference>
<dbReference type="GO" id="GO:0015633">
    <property type="term" value="F:ABC-type zinc transporter activity"/>
    <property type="evidence" value="ECO:0007669"/>
    <property type="project" value="UniProtKB-EC"/>
</dbReference>
<dbReference type="GO" id="GO:0005524">
    <property type="term" value="F:ATP binding"/>
    <property type="evidence" value="ECO:0007669"/>
    <property type="project" value="UniProtKB-KW"/>
</dbReference>
<dbReference type="GO" id="GO:0016887">
    <property type="term" value="F:ATP hydrolysis activity"/>
    <property type="evidence" value="ECO:0007669"/>
    <property type="project" value="InterPro"/>
</dbReference>
<dbReference type="GO" id="GO:0010043">
    <property type="term" value="P:response to zinc ion"/>
    <property type="evidence" value="ECO:0007669"/>
    <property type="project" value="TreeGrafter"/>
</dbReference>
<dbReference type="Gene3D" id="3.40.50.300">
    <property type="entry name" value="P-loop containing nucleotide triphosphate hydrolases"/>
    <property type="match status" value="1"/>
</dbReference>
<dbReference type="InterPro" id="IPR003593">
    <property type="entry name" value="AAA+_ATPase"/>
</dbReference>
<dbReference type="InterPro" id="IPR003439">
    <property type="entry name" value="ABC_transporter-like_ATP-bd"/>
</dbReference>
<dbReference type="InterPro" id="IPR017871">
    <property type="entry name" value="ABC_transporter-like_CS"/>
</dbReference>
<dbReference type="InterPro" id="IPR050153">
    <property type="entry name" value="Metal_Ion_Import_ABC"/>
</dbReference>
<dbReference type="InterPro" id="IPR027417">
    <property type="entry name" value="P-loop_NTPase"/>
</dbReference>
<dbReference type="PANTHER" id="PTHR42734">
    <property type="entry name" value="METAL TRANSPORT SYSTEM ATP-BINDING PROTEIN TM_0124-RELATED"/>
    <property type="match status" value="1"/>
</dbReference>
<dbReference type="PANTHER" id="PTHR42734:SF9">
    <property type="entry name" value="ZINC IMPORT ATP-BINDING PROTEIN ZNUC"/>
    <property type="match status" value="1"/>
</dbReference>
<dbReference type="Pfam" id="PF00005">
    <property type="entry name" value="ABC_tran"/>
    <property type="match status" value="1"/>
</dbReference>
<dbReference type="SMART" id="SM00382">
    <property type="entry name" value="AAA"/>
    <property type="match status" value="1"/>
</dbReference>
<dbReference type="SUPFAM" id="SSF52540">
    <property type="entry name" value="P-loop containing nucleoside triphosphate hydrolases"/>
    <property type="match status" value="1"/>
</dbReference>
<dbReference type="PROSITE" id="PS00211">
    <property type="entry name" value="ABC_TRANSPORTER_1"/>
    <property type="match status" value="1"/>
</dbReference>
<dbReference type="PROSITE" id="PS50893">
    <property type="entry name" value="ABC_TRANSPORTER_2"/>
    <property type="match status" value="1"/>
</dbReference>
<dbReference type="PROSITE" id="PS51298">
    <property type="entry name" value="ZNUC"/>
    <property type="match status" value="1"/>
</dbReference>